<evidence type="ECO:0000255" key="1">
    <source>
        <dbReference type="HAMAP-Rule" id="MF_00009"/>
    </source>
</evidence>
<evidence type="ECO:0000256" key="2">
    <source>
        <dbReference type="SAM" id="MobiDB-lite"/>
    </source>
</evidence>
<sequence>MIVITTRTGAMTGFPLSRHDIRIALHSMLSCLGLSGAHVEVILTDDGESAQLNREFLGCYGPTNILSFPAAGPVAAPRQEPDSPPACRKDSSHAEDDTDLGVLALSTGAVHRESFLYGQPPHRHALRLLAHGLLHLAGYDHGPQMDDMTETLMQCATGKAAADTVVTGF</sequence>
<proteinExistence type="inferred from homology"/>
<protein>
    <recommendedName>
        <fullName evidence="1">Endoribonuclease YbeY</fullName>
        <ecNumber evidence="1">3.1.-.-</ecNumber>
    </recommendedName>
</protein>
<feature type="chain" id="PRO_0000284200" description="Endoribonuclease YbeY">
    <location>
        <begin position="1"/>
        <end position="169"/>
    </location>
</feature>
<feature type="region of interest" description="Disordered" evidence="2">
    <location>
        <begin position="72"/>
        <end position="95"/>
    </location>
</feature>
<feature type="binding site" evidence="1">
    <location>
        <position position="131"/>
    </location>
    <ligand>
        <name>Zn(2+)</name>
        <dbReference type="ChEBI" id="CHEBI:29105"/>
        <note>catalytic</note>
    </ligand>
</feature>
<feature type="binding site" evidence="1">
    <location>
        <position position="135"/>
    </location>
    <ligand>
        <name>Zn(2+)</name>
        <dbReference type="ChEBI" id="CHEBI:29105"/>
        <note>catalytic</note>
    </ligand>
</feature>
<feature type="binding site" evidence="1">
    <location>
        <position position="141"/>
    </location>
    <ligand>
        <name>Zn(2+)</name>
        <dbReference type="ChEBI" id="CHEBI:29105"/>
        <note>catalytic</note>
    </ligand>
</feature>
<reference key="1">
    <citation type="journal article" date="2011" name="J. Bacteriol.">
        <title>Complete genome sequence and updated annotation of Desulfovibrio alaskensis G20.</title>
        <authorList>
            <person name="Hauser L.J."/>
            <person name="Land M.L."/>
            <person name="Brown S.D."/>
            <person name="Larimer F."/>
            <person name="Keller K.L."/>
            <person name="Rapp-Giles B.J."/>
            <person name="Price M.N."/>
            <person name="Lin M."/>
            <person name="Bruce D.C."/>
            <person name="Detter J.C."/>
            <person name="Tapia R."/>
            <person name="Han C.S."/>
            <person name="Goodwin L.A."/>
            <person name="Cheng J.F."/>
            <person name="Pitluck S."/>
            <person name="Copeland A."/>
            <person name="Lucas S."/>
            <person name="Nolan M."/>
            <person name="Lapidus A.L."/>
            <person name="Palumbo A.V."/>
            <person name="Wall J.D."/>
        </authorList>
    </citation>
    <scope>NUCLEOTIDE SEQUENCE [LARGE SCALE GENOMIC DNA]</scope>
    <source>
        <strain>ATCC BAA-1058 / DSM 17464 / G20</strain>
    </source>
</reference>
<name>YBEY_OLEA2</name>
<gene>
    <name evidence="1" type="primary">ybeY</name>
    <name type="ordered locus">Dde_1651</name>
</gene>
<organism>
    <name type="scientific">Oleidesulfovibrio alaskensis (strain ATCC BAA-1058 / DSM 17464 / G20)</name>
    <name type="common">Desulfovibrio alaskensis</name>
    <dbReference type="NCBI Taxonomy" id="207559"/>
    <lineage>
        <taxon>Bacteria</taxon>
        <taxon>Pseudomonadati</taxon>
        <taxon>Thermodesulfobacteriota</taxon>
        <taxon>Desulfovibrionia</taxon>
        <taxon>Desulfovibrionales</taxon>
        <taxon>Desulfovibrionaceae</taxon>
        <taxon>Oleidesulfovibrio</taxon>
    </lineage>
</organism>
<comment type="function">
    <text evidence="1">Single strand-specific metallo-endoribonuclease involved in late-stage 70S ribosome quality control and in maturation of the 3' terminus of the 16S rRNA.</text>
</comment>
<comment type="cofactor">
    <cofactor evidence="1">
        <name>Zn(2+)</name>
        <dbReference type="ChEBI" id="CHEBI:29105"/>
    </cofactor>
    <text evidence="1">Binds 1 zinc ion.</text>
</comment>
<comment type="subcellular location">
    <subcellularLocation>
        <location evidence="1">Cytoplasm</location>
    </subcellularLocation>
</comment>
<comment type="similarity">
    <text evidence="1">Belongs to the endoribonuclease YbeY family.</text>
</comment>
<accession>Q311E8</accession>
<keyword id="KW-0963">Cytoplasm</keyword>
<keyword id="KW-0255">Endonuclease</keyword>
<keyword id="KW-0378">Hydrolase</keyword>
<keyword id="KW-0479">Metal-binding</keyword>
<keyword id="KW-0540">Nuclease</keyword>
<keyword id="KW-1185">Reference proteome</keyword>
<keyword id="KW-0690">Ribosome biogenesis</keyword>
<keyword id="KW-0698">rRNA processing</keyword>
<keyword id="KW-0862">Zinc</keyword>
<dbReference type="EC" id="3.1.-.-" evidence="1"/>
<dbReference type="EMBL" id="CP000112">
    <property type="protein sequence ID" value="ABB38448.1"/>
    <property type="molecule type" value="Genomic_DNA"/>
</dbReference>
<dbReference type="RefSeq" id="WP_011367600.1">
    <property type="nucleotide sequence ID" value="NC_007519.1"/>
</dbReference>
<dbReference type="SMR" id="Q311E8"/>
<dbReference type="STRING" id="207559.Dde_1651"/>
<dbReference type="KEGG" id="dde:Dde_1651"/>
<dbReference type="eggNOG" id="COG0319">
    <property type="taxonomic scope" value="Bacteria"/>
</dbReference>
<dbReference type="HOGENOM" id="CLU_106710_4_1_7"/>
<dbReference type="Proteomes" id="UP000002710">
    <property type="component" value="Chromosome"/>
</dbReference>
<dbReference type="GO" id="GO:0005737">
    <property type="term" value="C:cytoplasm"/>
    <property type="evidence" value="ECO:0007669"/>
    <property type="project" value="UniProtKB-SubCell"/>
</dbReference>
<dbReference type="GO" id="GO:0004222">
    <property type="term" value="F:metalloendopeptidase activity"/>
    <property type="evidence" value="ECO:0007669"/>
    <property type="project" value="InterPro"/>
</dbReference>
<dbReference type="GO" id="GO:0004521">
    <property type="term" value="F:RNA endonuclease activity"/>
    <property type="evidence" value="ECO:0007669"/>
    <property type="project" value="UniProtKB-UniRule"/>
</dbReference>
<dbReference type="GO" id="GO:0008270">
    <property type="term" value="F:zinc ion binding"/>
    <property type="evidence" value="ECO:0007669"/>
    <property type="project" value="UniProtKB-UniRule"/>
</dbReference>
<dbReference type="GO" id="GO:0006364">
    <property type="term" value="P:rRNA processing"/>
    <property type="evidence" value="ECO:0007669"/>
    <property type="project" value="UniProtKB-UniRule"/>
</dbReference>
<dbReference type="Gene3D" id="3.40.390.30">
    <property type="entry name" value="Metalloproteases ('zincins'), catalytic domain"/>
    <property type="match status" value="1"/>
</dbReference>
<dbReference type="HAMAP" id="MF_00009">
    <property type="entry name" value="Endoribonucl_YbeY"/>
    <property type="match status" value="1"/>
</dbReference>
<dbReference type="InterPro" id="IPR023091">
    <property type="entry name" value="MetalPrtase_cat_dom_sf_prd"/>
</dbReference>
<dbReference type="InterPro" id="IPR002036">
    <property type="entry name" value="YbeY"/>
</dbReference>
<dbReference type="InterPro" id="IPR020549">
    <property type="entry name" value="YbeY_CS"/>
</dbReference>
<dbReference type="NCBIfam" id="TIGR00043">
    <property type="entry name" value="rRNA maturation RNase YbeY"/>
    <property type="match status" value="1"/>
</dbReference>
<dbReference type="Pfam" id="PF02130">
    <property type="entry name" value="YbeY"/>
    <property type="match status" value="1"/>
</dbReference>
<dbReference type="SUPFAM" id="SSF55486">
    <property type="entry name" value="Metalloproteases ('zincins'), catalytic domain"/>
    <property type="match status" value="1"/>
</dbReference>
<dbReference type="PROSITE" id="PS01306">
    <property type="entry name" value="UPF0054"/>
    <property type="match status" value="1"/>
</dbReference>